<keyword id="KW-1185">Reference proteome</keyword>
<proteinExistence type="inferred from homology"/>
<accession>Q54UR4</accession>
<comment type="similarity">
    <text evidence="2">Belongs to the hssA/B family.</text>
</comment>
<name>HSL34_DICDI</name>
<dbReference type="EMBL" id="AAFI02000039">
    <property type="protein sequence ID" value="EAL66978.1"/>
    <property type="molecule type" value="Genomic_DNA"/>
</dbReference>
<dbReference type="RefSeq" id="XP_640957.1">
    <property type="nucleotide sequence ID" value="XM_635865.1"/>
</dbReference>
<dbReference type="PaxDb" id="44689-DDB0232090"/>
<dbReference type="EnsemblProtists" id="EAL66978">
    <property type="protein sequence ID" value="EAL66978"/>
    <property type="gene ID" value="DDB_G0280873"/>
</dbReference>
<dbReference type="GeneID" id="8622761"/>
<dbReference type="KEGG" id="ddi:DDB_G0280873"/>
<dbReference type="dictyBase" id="DDB_G0280873"/>
<dbReference type="HOGENOM" id="CLU_181850_0_0_1"/>
<dbReference type="InParanoid" id="Q54UR4"/>
<dbReference type="PRO" id="PR:Q54UR4"/>
<dbReference type="Proteomes" id="UP000002195">
    <property type="component" value="Chromosome 3"/>
</dbReference>
<dbReference type="GO" id="GO:0030587">
    <property type="term" value="P:sorocarp development"/>
    <property type="evidence" value="ECO:0000318"/>
    <property type="project" value="GO_Central"/>
</dbReference>
<dbReference type="InterPro" id="IPR008455">
    <property type="entry name" value="HssA/B-related"/>
</dbReference>
<dbReference type="Pfam" id="PF05710">
    <property type="entry name" value="Coiled"/>
    <property type="match status" value="1"/>
</dbReference>
<sequence>MTLFSSISSMSSSMTSSRSSIASFGSGTSMGSNSIACSVGSGSCGSGSGSGGCGDLTGGAKSSGGSCGGKGGSHNHGHGHGHGPHGHGGKGSGGSCSC</sequence>
<feature type="chain" id="PRO_0000330402" description="HssA/B-like protein 34">
    <location>
        <begin position="1"/>
        <end position="98"/>
    </location>
</feature>
<feature type="region of interest" description="Disordered" evidence="1">
    <location>
        <begin position="1"/>
        <end position="26"/>
    </location>
</feature>
<feature type="region of interest" description="Disordered" evidence="1">
    <location>
        <begin position="60"/>
        <end position="98"/>
    </location>
</feature>
<feature type="compositionally biased region" description="Gly residues" evidence="1">
    <location>
        <begin position="60"/>
        <end position="72"/>
    </location>
</feature>
<feature type="compositionally biased region" description="Basic residues" evidence="1">
    <location>
        <begin position="73"/>
        <end position="88"/>
    </location>
</feature>
<feature type="compositionally biased region" description="Gly residues" evidence="1">
    <location>
        <begin position="89"/>
        <end position="98"/>
    </location>
</feature>
<protein>
    <recommendedName>
        <fullName>HssA/B-like protein 34</fullName>
    </recommendedName>
</protein>
<gene>
    <name type="primary">hssl34</name>
    <name type="ORF">DDB_G0280873</name>
</gene>
<evidence type="ECO:0000256" key="1">
    <source>
        <dbReference type="SAM" id="MobiDB-lite"/>
    </source>
</evidence>
<evidence type="ECO:0000305" key="2"/>
<reference key="1">
    <citation type="journal article" date="2005" name="Nature">
        <title>The genome of the social amoeba Dictyostelium discoideum.</title>
        <authorList>
            <person name="Eichinger L."/>
            <person name="Pachebat J.A."/>
            <person name="Gloeckner G."/>
            <person name="Rajandream M.A."/>
            <person name="Sucgang R."/>
            <person name="Berriman M."/>
            <person name="Song J."/>
            <person name="Olsen R."/>
            <person name="Szafranski K."/>
            <person name="Xu Q."/>
            <person name="Tunggal B."/>
            <person name="Kummerfeld S."/>
            <person name="Madera M."/>
            <person name="Konfortov B.A."/>
            <person name="Rivero F."/>
            <person name="Bankier A.T."/>
            <person name="Lehmann R."/>
            <person name="Hamlin N."/>
            <person name="Davies R."/>
            <person name="Gaudet P."/>
            <person name="Fey P."/>
            <person name="Pilcher K."/>
            <person name="Chen G."/>
            <person name="Saunders D."/>
            <person name="Sodergren E.J."/>
            <person name="Davis P."/>
            <person name="Kerhornou A."/>
            <person name="Nie X."/>
            <person name="Hall N."/>
            <person name="Anjard C."/>
            <person name="Hemphill L."/>
            <person name="Bason N."/>
            <person name="Farbrother P."/>
            <person name="Desany B."/>
            <person name="Just E."/>
            <person name="Morio T."/>
            <person name="Rost R."/>
            <person name="Churcher C.M."/>
            <person name="Cooper J."/>
            <person name="Haydock S."/>
            <person name="van Driessche N."/>
            <person name="Cronin A."/>
            <person name="Goodhead I."/>
            <person name="Muzny D.M."/>
            <person name="Mourier T."/>
            <person name="Pain A."/>
            <person name="Lu M."/>
            <person name="Harper D."/>
            <person name="Lindsay R."/>
            <person name="Hauser H."/>
            <person name="James K.D."/>
            <person name="Quiles M."/>
            <person name="Madan Babu M."/>
            <person name="Saito T."/>
            <person name="Buchrieser C."/>
            <person name="Wardroper A."/>
            <person name="Felder M."/>
            <person name="Thangavelu M."/>
            <person name="Johnson D."/>
            <person name="Knights A."/>
            <person name="Loulseged H."/>
            <person name="Mungall K.L."/>
            <person name="Oliver K."/>
            <person name="Price C."/>
            <person name="Quail M.A."/>
            <person name="Urushihara H."/>
            <person name="Hernandez J."/>
            <person name="Rabbinowitsch E."/>
            <person name="Steffen D."/>
            <person name="Sanders M."/>
            <person name="Ma J."/>
            <person name="Kohara Y."/>
            <person name="Sharp S."/>
            <person name="Simmonds M.N."/>
            <person name="Spiegler S."/>
            <person name="Tivey A."/>
            <person name="Sugano S."/>
            <person name="White B."/>
            <person name="Walker D."/>
            <person name="Woodward J.R."/>
            <person name="Winckler T."/>
            <person name="Tanaka Y."/>
            <person name="Shaulsky G."/>
            <person name="Schleicher M."/>
            <person name="Weinstock G.M."/>
            <person name="Rosenthal A."/>
            <person name="Cox E.C."/>
            <person name="Chisholm R.L."/>
            <person name="Gibbs R.A."/>
            <person name="Loomis W.F."/>
            <person name="Platzer M."/>
            <person name="Kay R.R."/>
            <person name="Williams J.G."/>
            <person name="Dear P.H."/>
            <person name="Noegel A.A."/>
            <person name="Barrell B.G."/>
            <person name="Kuspa A."/>
        </authorList>
    </citation>
    <scope>NUCLEOTIDE SEQUENCE [LARGE SCALE GENOMIC DNA]</scope>
    <source>
        <strain>AX4</strain>
    </source>
</reference>
<organism>
    <name type="scientific">Dictyostelium discoideum</name>
    <name type="common">Social amoeba</name>
    <dbReference type="NCBI Taxonomy" id="44689"/>
    <lineage>
        <taxon>Eukaryota</taxon>
        <taxon>Amoebozoa</taxon>
        <taxon>Evosea</taxon>
        <taxon>Eumycetozoa</taxon>
        <taxon>Dictyostelia</taxon>
        <taxon>Dictyosteliales</taxon>
        <taxon>Dictyosteliaceae</taxon>
        <taxon>Dictyostelium</taxon>
    </lineage>
</organism>